<evidence type="ECO:0000255" key="1">
    <source>
        <dbReference type="HAMAP-Rule" id="MF_00340"/>
    </source>
</evidence>
<evidence type="ECO:0000256" key="2">
    <source>
        <dbReference type="SAM" id="MobiDB-lite"/>
    </source>
</evidence>
<evidence type="ECO:0000305" key="3"/>
<feature type="chain" id="PRO_0000296462" description="Large ribosomal subunit protein bL32">
    <location>
        <begin position="1"/>
        <end position="57"/>
    </location>
</feature>
<feature type="region of interest" description="Disordered" evidence="2">
    <location>
        <begin position="1"/>
        <end position="38"/>
    </location>
</feature>
<sequence length="57" mass="6446">MAVQQNKPTRSKRGMRRSHDALTAVTSLSVDKTSGEKHLRHHITADGYYRGRKVIAK</sequence>
<dbReference type="EMBL" id="CP000243">
    <property type="protein sequence ID" value="ABE06696.1"/>
    <property type="molecule type" value="Genomic_DNA"/>
</dbReference>
<dbReference type="RefSeq" id="WP_000290727.1">
    <property type="nucleotide sequence ID" value="NZ_CP064825.1"/>
</dbReference>
<dbReference type="SMR" id="Q1RD68"/>
<dbReference type="GeneID" id="93776319"/>
<dbReference type="KEGG" id="eci:UTI89_C1214"/>
<dbReference type="HOGENOM" id="CLU_129084_2_1_6"/>
<dbReference type="Proteomes" id="UP000001952">
    <property type="component" value="Chromosome"/>
</dbReference>
<dbReference type="GO" id="GO:0015934">
    <property type="term" value="C:large ribosomal subunit"/>
    <property type="evidence" value="ECO:0007669"/>
    <property type="project" value="InterPro"/>
</dbReference>
<dbReference type="GO" id="GO:0003735">
    <property type="term" value="F:structural constituent of ribosome"/>
    <property type="evidence" value="ECO:0007669"/>
    <property type="project" value="InterPro"/>
</dbReference>
<dbReference type="GO" id="GO:0006412">
    <property type="term" value="P:translation"/>
    <property type="evidence" value="ECO:0007669"/>
    <property type="project" value="UniProtKB-UniRule"/>
</dbReference>
<dbReference type="HAMAP" id="MF_00340">
    <property type="entry name" value="Ribosomal_bL32"/>
    <property type="match status" value="1"/>
</dbReference>
<dbReference type="InterPro" id="IPR002677">
    <property type="entry name" value="Ribosomal_bL32"/>
</dbReference>
<dbReference type="InterPro" id="IPR044957">
    <property type="entry name" value="Ribosomal_bL32_bact"/>
</dbReference>
<dbReference type="InterPro" id="IPR011332">
    <property type="entry name" value="Ribosomal_zn-bd"/>
</dbReference>
<dbReference type="NCBIfam" id="TIGR01031">
    <property type="entry name" value="rpmF_bact"/>
    <property type="match status" value="1"/>
</dbReference>
<dbReference type="PANTHER" id="PTHR35534">
    <property type="entry name" value="50S RIBOSOMAL PROTEIN L32"/>
    <property type="match status" value="1"/>
</dbReference>
<dbReference type="PANTHER" id="PTHR35534:SF1">
    <property type="entry name" value="LARGE RIBOSOMAL SUBUNIT PROTEIN BL32"/>
    <property type="match status" value="1"/>
</dbReference>
<dbReference type="Pfam" id="PF01783">
    <property type="entry name" value="Ribosomal_L32p"/>
    <property type="match status" value="1"/>
</dbReference>
<dbReference type="SUPFAM" id="SSF57829">
    <property type="entry name" value="Zn-binding ribosomal proteins"/>
    <property type="match status" value="1"/>
</dbReference>
<keyword id="KW-0687">Ribonucleoprotein</keyword>
<keyword id="KW-0689">Ribosomal protein</keyword>
<reference key="1">
    <citation type="journal article" date="2006" name="Proc. Natl. Acad. Sci. U.S.A.">
        <title>Identification of genes subject to positive selection in uropathogenic strains of Escherichia coli: a comparative genomics approach.</title>
        <authorList>
            <person name="Chen S.L."/>
            <person name="Hung C.-S."/>
            <person name="Xu J."/>
            <person name="Reigstad C.S."/>
            <person name="Magrini V."/>
            <person name="Sabo A."/>
            <person name="Blasiar D."/>
            <person name="Bieri T."/>
            <person name="Meyer R.R."/>
            <person name="Ozersky P."/>
            <person name="Armstrong J.R."/>
            <person name="Fulton R.S."/>
            <person name="Latreille J.P."/>
            <person name="Spieth J."/>
            <person name="Hooton T.M."/>
            <person name="Mardis E.R."/>
            <person name="Hultgren S.J."/>
            <person name="Gordon J.I."/>
        </authorList>
    </citation>
    <scope>NUCLEOTIDE SEQUENCE [LARGE SCALE GENOMIC DNA]</scope>
    <source>
        <strain>UTI89 / UPEC</strain>
    </source>
</reference>
<organism>
    <name type="scientific">Escherichia coli (strain UTI89 / UPEC)</name>
    <dbReference type="NCBI Taxonomy" id="364106"/>
    <lineage>
        <taxon>Bacteria</taxon>
        <taxon>Pseudomonadati</taxon>
        <taxon>Pseudomonadota</taxon>
        <taxon>Gammaproteobacteria</taxon>
        <taxon>Enterobacterales</taxon>
        <taxon>Enterobacteriaceae</taxon>
        <taxon>Escherichia</taxon>
    </lineage>
</organism>
<comment type="similarity">
    <text evidence="1">Belongs to the bacterial ribosomal protein bL32 family.</text>
</comment>
<accession>Q1RD68</accession>
<gene>
    <name evidence="1" type="primary">rpmF</name>
    <name type="ordered locus">UTI89_C1214</name>
</gene>
<proteinExistence type="inferred from homology"/>
<protein>
    <recommendedName>
        <fullName evidence="1">Large ribosomal subunit protein bL32</fullName>
    </recommendedName>
    <alternativeName>
        <fullName evidence="3">50S ribosomal protein L32</fullName>
    </alternativeName>
</protein>
<name>RL32_ECOUT</name>